<evidence type="ECO:0000250" key="1"/>
<evidence type="ECO:0000256" key="2">
    <source>
        <dbReference type="SAM" id="MobiDB-lite"/>
    </source>
</evidence>
<evidence type="ECO:0000305" key="3"/>
<evidence type="ECO:0000305" key="4">
    <source>
    </source>
</evidence>
<reference key="1">
    <citation type="journal article" date="1978" name="Cell">
        <title>The DNA sequence of sea urchin (S. purpuratus) H2A, H2B and H3 histone coding and spacer regions.</title>
        <authorList>
            <person name="Sures I."/>
            <person name="Lowry J."/>
            <person name="Kedes L.H."/>
        </authorList>
    </citation>
    <scope>NUCLEOTIDE SEQUENCE [GENOMIC DNA]</scope>
</reference>
<reference key="2">
    <citation type="journal article" date="1995" name="Dev. Genet.">
        <title>Embryonic regulation of histone ubiquitination in the sea urchin.</title>
        <authorList>
            <person name="Jasinskiene N."/>
            <person name="Jasinskas A."/>
            <person name="Langmore J.P."/>
        </authorList>
    </citation>
    <scope>UBIQUITINATION</scope>
</reference>
<organism>
    <name type="scientific">Strongylocentrotus purpuratus</name>
    <name type="common">Purple sea urchin</name>
    <dbReference type="NCBI Taxonomy" id="7668"/>
    <lineage>
        <taxon>Eukaryota</taxon>
        <taxon>Metazoa</taxon>
        <taxon>Echinodermata</taxon>
        <taxon>Eleutherozoa</taxon>
        <taxon>Echinozoa</taxon>
        <taxon>Echinoidea</taxon>
        <taxon>Euechinoidea</taxon>
        <taxon>Echinacea</taxon>
        <taxon>Camarodonta</taxon>
        <taxon>Echinidea</taxon>
        <taxon>Strongylocentrotidae</taxon>
        <taxon>Strongylocentrotus</taxon>
    </lineage>
</organism>
<protein>
    <recommendedName>
        <fullName>Histone H2A, embryonic</fullName>
    </recommendedName>
</protein>
<comment type="function">
    <text>Core component of nucleosome. Nucleosomes wrap and compact DNA into chromatin, limiting DNA accessibility to the cellular machineries which require DNA as a template. Histones thereby play a central role in transcription regulation, DNA repair, DNA replication and chromosomal stability. DNA accessibility is regulated via a complex set of post-translational modifications of histones, also called histone code, and nucleosome remodeling.</text>
</comment>
<comment type="subunit">
    <text>The nucleosome is a histone octamer containing two molecules each of H2A, H2B, H3 and H4 assembled in one H3-H4 heterotetramer and two H2A-H2B heterodimers. The octamer wraps approximately 147 bp of DNA.</text>
</comment>
<comment type="subcellular location">
    <subcellularLocation>
        <location>Nucleus</location>
    </subcellularLocation>
    <subcellularLocation>
        <location>Chromosome</location>
    </subcellularLocation>
</comment>
<comment type="PTM">
    <text evidence="3">Monoubiquitination of Lys-119 gives a specific tag for epigenetic transcriptional repression.</text>
</comment>
<comment type="PTM">
    <text evidence="1">Phosphorylation of Ser-2 directly represses transcription.</text>
</comment>
<comment type="similarity">
    <text evidence="3">Belongs to the histone H2A family.</text>
</comment>
<name>H2A_STRPU</name>
<dbReference type="EMBL" id="V01357">
    <property type="protein sequence ID" value="CAA24648.1"/>
    <property type="molecule type" value="Genomic_DNA"/>
</dbReference>
<dbReference type="PIR" id="A02598">
    <property type="entry name" value="HSUR7M"/>
</dbReference>
<dbReference type="RefSeq" id="NP_001014426.1">
    <property type="nucleotide sequence ID" value="NM_001014426.1"/>
</dbReference>
<dbReference type="RefSeq" id="XP_001178526.1">
    <property type="nucleotide sequence ID" value="XM_001178526.4"/>
</dbReference>
<dbReference type="RefSeq" id="XP_011668420.1">
    <property type="nucleotide sequence ID" value="XM_011670118.1"/>
</dbReference>
<dbReference type="RefSeq" id="XP_011668423.1">
    <property type="nucleotide sequence ID" value="XM_011670121.1"/>
</dbReference>
<dbReference type="RefSeq" id="XP_030837376.1">
    <property type="nucleotide sequence ID" value="XM_030981516.1"/>
</dbReference>
<dbReference type="RefSeq" id="XP_030837434.1">
    <property type="nucleotide sequence ID" value="XM_030981574.1"/>
</dbReference>
<dbReference type="RefSeq" id="XP_030837435.1">
    <property type="nucleotide sequence ID" value="XM_030981575.1"/>
</dbReference>
<dbReference type="SMR" id="P69141"/>
<dbReference type="FunCoup" id="P69141">
    <property type="interactions" value="1452"/>
</dbReference>
<dbReference type="STRING" id="7668.P69141"/>
<dbReference type="iPTMnet" id="P69141"/>
<dbReference type="EnsemblMetazoa" id="NM_001014426">
    <property type="protein sequence ID" value="NP_001014426"/>
    <property type="gene ID" value="GeneID_373337"/>
</dbReference>
<dbReference type="EnsemblMetazoa" id="XM_001178526">
    <property type="protein sequence ID" value="XP_001178526"/>
    <property type="gene ID" value="LOC753951"/>
</dbReference>
<dbReference type="EnsemblMetazoa" id="XM_030981516">
    <property type="protein sequence ID" value="XP_030837376"/>
    <property type="gene ID" value="LOC115922533"/>
</dbReference>
<dbReference type="EnsemblMetazoa" id="XM_030981574">
    <property type="protein sequence ID" value="XP_030837434"/>
    <property type="gene ID" value="LOC115922552"/>
</dbReference>
<dbReference type="EnsemblMetazoa" id="XM_030981575">
    <property type="protein sequence ID" value="XP_030837435"/>
    <property type="gene ID" value="LOC115922553"/>
</dbReference>
<dbReference type="GeneID" id="115922533"/>
<dbReference type="GeneID" id="115922552"/>
<dbReference type="GeneID" id="115922553"/>
<dbReference type="GeneID" id="373337"/>
<dbReference type="GeneID" id="753951"/>
<dbReference type="KEGG" id="spu:373337"/>
<dbReference type="KEGG" id="spu:753951"/>
<dbReference type="CTD" id="373337"/>
<dbReference type="eggNOG" id="KOG1756">
    <property type="taxonomic scope" value="Eukaryota"/>
</dbReference>
<dbReference type="HOGENOM" id="CLU_062828_3_3_1"/>
<dbReference type="InParanoid" id="P69141"/>
<dbReference type="OrthoDB" id="10253031at2759"/>
<dbReference type="PhylomeDB" id="P69141"/>
<dbReference type="Proteomes" id="UP000007110">
    <property type="component" value="Unassembled WGS sequence"/>
</dbReference>
<dbReference type="GO" id="GO:0000786">
    <property type="term" value="C:nucleosome"/>
    <property type="evidence" value="ECO:0000318"/>
    <property type="project" value="GO_Central"/>
</dbReference>
<dbReference type="GO" id="GO:0005634">
    <property type="term" value="C:nucleus"/>
    <property type="evidence" value="ECO:0000318"/>
    <property type="project" value="GO_Central"/>
</dbReference>
<dbReference type="GO" id="GO:0003677">
    <property type="term" value="F:DNA binding"/>
    <property type="evidence" value="ECO:0007669"/>
    <property type="project" value="UniProtKB-KW"/>
</dbReference>
<dbReference type="GO" id="GO:0046982">
    <property type="term" value="F:protein heterodimerization activity"/>
    <property type="evidence" value="ECO:0007669"/>
    <property type="project" value="InterPro"/>
</dbReference>
<dbReference type="GO" id="GO:0030527">
    <property type="term" value="F:structural constituent of chromatin"/>
    <property type="evidence" value="ECO:0000318"/>
    <property type="project" value="GO_Central"/>
</dbReference>
<dbReference type="GO" id="GO:0031507">
    <property type="term" value="P:heterochromatin formation"/>
    <property type="evidence" value="ECO:0000318"/>
    <property type="project" value="GO_Central"/>
</dbReference>
<dbReference type="CDD" id="cd00074">
    <property type="entry name" value="HFD_H2A"/>
    <property type="match status" value="1"/>
</dbReference>
<dbReference type="FunFam" id="1.10.20.10:FF:000020">
    <property type="entry name" value="Histone H2A"/>
    <property type="match status" value="1"/>
</dbReference>
<dbReference type="Gene3D" id="1.10.20.10">
    <property type="entry name" value="Histone, subunit A"/>
    <property type="match status" value="1"/>
</dbReference>
<dbReference type="InterPro" id="IPR009072">
    <property type="entry name" value="Histone-fold"/>
</dbReference>
<dbReference type="InterPro" id="IPR002119">
    <property type="entry name" value="Histone_H2A"/>
</dbReference>
<dbReference type="InterPro" id="IPR007125">
    <property type="entry name" value="Histone_H2A/H2B/H3"/>
</dbReference>
<dbReference type="InterPro" id="IPR032454">
    <property type="entry name" value="Histone_H2A_C"/>
</dbReference>
<dbReference type="InterPro" id="IPR032458">
    <property type="entry name" value="Histone_H2A_CS"/>
</dbReference>
<dbReference type="PANTHER" id="PTHR23430">
    <property type="entry name" value="HISTONE H2A"/>
    <property type="match status" value="1"/>
</dbReference>
<dbReference type="Pfam" id="PF00125">
    <property type="entry name" value="Histone"/>
    <property type="match status" value="1"/>
</dbReference>
<dbReference type="Pfam" id="PF16211">
    <property type="entry name" value="Histone_H2A_C"/>
    <property type="match status" value="1"/>
</dbReference>
<dbReference type="PRINTS" id="PR00620">
    <property type="entry name" value="HISTONEH2A"/>
</dbReference>
<dbReference type="SMART" id="SM00414">
    <property type="entry name" value="H2A"/>
    <property type="match status" value="1"/>
</dbReference>
<dbReference type="SUPFAM" id="SSF47113">
    <property type="entry name" value="Histone-fold"/>
    <property type="match status" value="1"/>
</dbReference>
<dbReference type="PROSITE" id="PS00046">
    <property type="entry name" value="HISTONE_H2A"/>
    <property type="match status" value="1"/>
</dbReference>
<accession>P69141</accession>
<accession>P02271</accession>
<feature type="initiator methionine" description="Removed" evidence="1">
    <location>
        <position position="1"/>
    </location>
</feature>
<feature type="chain" id="PRO_0000055280" description="Histone H2A, embryonic">
    <location>
        <begin position="2"/>
        <end position="124"/>
    </location>
</feature>
<feature type="region of interest" description="Disordered" evidence="2">
    <location>
        <begin position="1"/>
        <end position="21"/>
    </location>
</feature>
<feature type="compositionally biased region" description="Basic residues" evidence="2">
    <location>
        <begin position="1"/>
        <end position="18"/>
    </location>
</feature>
<feature type="modified residue" description="N-acetylserine" evidence="1">
    <location>
        <position position="2"/>
    </location>
</feature>
<feature type="modified residue" description="Phosphoserine" evidence="1">
    <location>
        <position position="2"/>
    </location>
</feature>
<feature type="modified residue" description="N5-methylglutamine" evidence="1">
    <location>
        <position position="104"/>
    </location>
</feature>
<feature type="cross-link" description="Glycyl lysine isopeptide (Lys-Gly) (interchain with G-Cter in ubiquitin)" evidence="4">
    <location>
        <position position="119"/>
    </location>
</feature>
<proteinExistence type="evidence at protein level"/>
<sequence>MSGRGKSGKARTKAKTRSSRAGLQFPVGRVHRFLRKGNYAKRVGGGAPVYMAAVLEYLTAEILELAGNAARDNKKSRIIPRHLQLAVRNDEELNKLLGGVTIAQGGVLPNIQAVLLPKKTAKSS</sequence>
<keyword id="KW-0007">Acetylation</keyword>
<keyword id="KW-0158">Chromosome</keyword>
<keyword id="KW-0238">DNA-binding</keyword>
<keyword id="KW-1017">Isopeptide bond</keyword>
<keyword id="KW-0488">Methylation</keyword>
<keyword id="KW-0544">Nucleosome core</keyword>
<keyword id="KW-0539">Nucleus</keyword>
<keyword id="KW-0597">Phosphoprotein</keyword>
<keyword id="KW-1185">Reference proteome</keyword>
<keyword id="KW-0832">Ubl conjugation</keyword>